<reference key="1">
    <citation type="journal article" date="1996" name="J. Bacteriol.">
        <title>Identification of sulfate starvation-regulated genes in Escherichia coli: a gene cluster involved in the utilization of taurine as a sulfur source.</title>
        <authorList>
            <person name="van der Ploeg J.R."/>
            <person name="Weiss M.A."/>
            <person name="Saller E."/>
            <person name="Nashimoto H."/>
            <person name="Saito N."/>
            <person name="Kertesz M.A."/>
            <person name="Leisinger T."/>
        </authorList>
    </citation>
    <scope>NUCLEOTIDE SEQUENCE [GENOMIC DNA]</scope>
    <scope>INDUCTION</scope>
    <scope>DISRUPTION PHENOTYPE</scope>
    <scope>PATHWAY</scope>
    <source>
        <strain>K12</strain>
    </source>
</reference>
<reference key="2">
    <citation type="submission" date="1997-01" db="EMBL/GenBank/DDBJ databases">
        <title>Sequence of minutes 4-25 of Escherichia coli.</title>
        <authorList>
            <person name="Chung E."/>
            <person name="Allen E."/>
            <person name="Araujo R."/>
            <person name="Aparicio A.M."/>
            <person name="Davis K."/>
            <person name="Duncan M."/>
            <person name="Federspiel N."/>
            <person name="Hyman R."/>
            <person name="Kalman S."/>
            <person name="Komp C."/>
            <person name="Kurdi O."/>
            <person name="Lew H."/>
            <person name="Lin D."/>
            <person name="Namath A."/>
            <person name="Oefner P."/>
            <person name="Roberts D."/>
            <person name="Schramm S."/>
            <person name="Davis R.W."/>
        </authorList>
    </citation>
    <scope>NUCLEOTIDE SEQUENCE [LARGE SCALE GENOMIC DNA]</scope>
    <source>
        <strain>K12 / MG1655 / ATCC 47076</strain>
    </source>
</reference>
<reference key="3">
    <citation type="journal article" date="1997" name="Science">
        <title>The complete genome sequence of Escherichia coli K-12.</title>
        <authorList>
            <person name="Blattner F.R."/>
            <person name="Plunkett G. III"/>
            <person name="Bloch C.A."/>
            <person name="Perna N.T."/>
            <person name="Burland V."/>
            <person name="Riley M."/>
            <person name="Collado-Vides J."/>
            <person name="Glasner J.D."/>
            <person name="Rode C.K."/>
            <person name="Mayhew G.F."/>
            <person name="Gregor J."/>
            <person name="Davis N.W."/>
            <person name="Kirkpatrick H.A."/>
            <person name="Goeden M.A."/>
            <person name="Rose D.J."/>
            <person name="Mau B."/>
            <person name="Shao Y."/>
        </authorList>
    </citation>
    <scope>NUCLEOTIDE SEQUENCE [LARGE SCALE GENOMIC DNA]</scope>
    <source>
        <strain>K12 / MG1655 / ATCC 47076</strain>
    </source>
</reference>
<reference key="4">
    <citation type="journal article" date="2006" name="Mol. Syst. Biol.">
        <title>Highly accurate genome sequences of Escherichia coli K-12 strains MG1655 and W3110.</title>
        <authorList>
            <person name="Hayashi K."/>
            <person name="Morooka N."/>
            <person name="Yamamoto Y."/>
            <person name="Fujita K."/>
            <person name="Isono K."/>
            <person name="Choi S."/>
            <person name="Ohtsubo E."/>
            <person name="Baba T."/>
            <person name="Wanner B.L."/>
            <person name="Mori H."/>
            <person name="Horiuchi T."/>
        </authorList>
    </citation>
    <scope>NUCLEOTIDE SEQUENCE [LARGE SCALE GENOMIC DNA]</scope>
    <source>
        <strain>K12 / W3110 / ATCC 27325 / DSM 5911</strain>
    </source>
</reference>
<reference key="5">
    <citation type="journal article" date="1989" name="Gene">
        <title>The structure of the Escherichia coli hemB gene.</title>
        <authorList>
            <person name="Li J.-M."/>
            <person name="Russell C.S."/>
            <person name="Cosloy S.D."/>
        </authorList>
    </citation>
    <scope>NUCLEOTIDE SEQUENCE [GENOMIC DNA] OF 237-283</scope>
    <source>
        <strain>K12</strain>
    </source>
</reference>
<reference key="6">
    <citation type="journal article" date="1996" name="Eur. J. Biochem.">
        <title>Analysis of global responses by protein and peptide fingerprinting of proteins isolated by two-dimensional gel electrophoresis. Application to the sulfate-starvation response of Escherichia coli.</title>
        <authorList>
            <person name="Quadroni M."/>
            <person name="Staudenmann W."/>
            <person name="Kertesz M.A."/>
            <person name="James P."/>
        </authorList>
    </citation>
    <scope>PROTEIN SEQUENCE OF 2-11; 42-46 AND 59-63</scope>
    <scope>IDENTIFICATION BY MASS SPECTROMETRY</scope>
    <source>
        <strain>K12 / MC4100 / ATCC 35695 / DSM 6574</strain>
    </source>
</reference>
<reference key="7">
    <citation type="journal article" date="1994" name="Nucleic Acids Res.">
        <title>Intrinsic and extrinsic approaches for detecting genes in a bacterial genome.</title>
        <authorList>
            <person name="Borodovsky M."/>
            <person name="Rudd K.E."/>
            <person name="Koonin E.V."/>
        </authorList>
    </citation>
    <scope>IDENTIFICATION</scope>
</reference>
<reference key="8">
    <citation type="journal article" date="1997" name="J. Biol. Chem.">
        <title>Characterization of alpha-ketoglutarate-dependent taurine dioxygenase from Escherichia coli.</title>
        <authorList>
            <person name="Eichhorn E."/>
            <person name="van der Ploeg J.R."/>
            <person name="Kertesz M.A."/>
            <person name="Leisinger T."/>
        </authorList>
    </citation>
    <scope>FUNCTION</scope>
    <scope>CATALYTIC ACTIVITY</scope>
    <scope>SUBSTRATE SPECIFICITY</scope>
    <scope>COFACTOR</scope>
    <scope>BIOPHYSICOCHEMICAL PROPERTIES</scope>
    <scope>ACTIVITY REGULATION</scope>
    <scope>SUBUNIT</scope>
    <scope>INDUCTION</scope>
</reference>
<reference key="9">
    <citation type="journal article" date="2012" name="Anal. Biochem.">
        <title>A simple assay of taurine concentrations in food and biological samples using taurine dioxygenase.</title>
        <authorList>
            <person name="Matsuda M."/>
            <person name="Asano Y."/>
        </authorList>
    </citation>
    <scope>BIOTECHNOLOGY</scope>
    <source>
        <strain>K12</strain>
    </source>
</reference>
<reference key="10">
    <citation type="journal article" date="2012" name="FEBS J.">
        <title>The Fe(II)/alpha-ketoglutarate-dependent taurine dioxygenases from Pseudomonas putida and Escherichia coli are tetramers.</title>
        <authorList>
            <person name="Knauer S.H."/>
            <person name="Hartl-Spiegelhauer O."/>
            <person name="Schwarzinger S."/>
            <person name="Hanzelmann P."/>
            <person name="Dobbek H."/>
        </authorList>
    </citation>
    <scope>SUBUNIT</scope>
</reference>
<reference key="11">
    <citation type="journal article" date="2002" name="Biochemistry">
        <title>X-ray crystal structure of Escherichia coli taurine/alpha-ketoglutarate dioxygenase complexed to ferrous iron and substrates.</title>
        <authorList>
            <person name="Elkins J.M."/>
            <person name="Ryle M.J."/>
            <person name="Clifton I.J."/>
            <person name="Dunning Hotopp J.C."/>
            <person name="Lloyd J.S."/>
            <person name="Burzlaff N.I."/>
            <person name="Baldwin J.E."/>
            <person name="Hausinger R.P."/>
            <person name="Roach P.L."/>
        </authorList>
    </citation>
    <scope>X-RAY CRYSTALLOGRAPHY (2.5 ANGSTROMS) IN COMPLEX WITH IRON; 2-OXOGLUTARATE AND TAURINE</scope>
    <scope>CATALYTIC ACTIVITY</scope>
    <scope>COFACTOR</scope>
    <scope>SUBUNIT</scope>
    <scope>HYDROXYLATION AT TRP-128; TRP-240 AND TRP-248</scope>
</reference>
<reference key="12">
    <citation type="journal article" date="2003" name="Biochemistry">
        <title>Substrate-induced conformational changes in Escherichia coli taurine/alpha-ketoglutarate dioxygenase and insight into the oligomeric structure.</title>
        <authorList>
            <person name="O'Brien J.R."/>
            <person name="Schuller D.J."/>
            <person name="Yang V.S."/>
            <person name="Dillard B.D."/>
            <person name="Lanzilotta W.N."/>
        </authorList>
    </citation>
    <scope>X-RAY CRYSTALLOGRAPHY (1.9 ANGSTROMS) IN COMPLEX WITH IRON; 2-OXOGLUTARATE AND TAURINE</scope>
    <scope>CATALYTIC ACTIVITY</scope>
    <scope>COFACTOR</scope>
    <scope>SUBUNIT</scope>
</reference>
<gene>
    <name type="primary">tauD</name>
    <name type="synonym">ssiD</name>
    <name type="synonym">yaiG</name>
    <name type="ordered locus">b0368</name>
    <name type="ordered locus">JW0360</name>
</gene>
<feature type="initiator methionine" description="Removed" evidence="5">
    <location>
        <position position="1"/>
    </location>
</feature>
<feature type="chain" id="PRO_0000194016" description="Alpha-ketoglutarate-dependent taurine dioxygenase">
    <location>
        <begin position="2"/>
        <end position="283"/>
    </location>
</feature>
<feature type="binding site" evidence="1 2">
    <location>
        <position position="70"/>
    </location>
    <ligand>
        <name>taurine</name>
        <dbReference type="ChEBI" id="CHEBI:507393"/>
    </ligand>
</feature>
<feature type="binding site" evidence="1 2">
    <location>
        <position position="73"/>
    </location>
    <ligand>
        <name>taurine</name>
        <dbReference type="ChEBI" id="CHEBI:507393"/>
    </ligand>
</feature>
<feature type="binding site" evidence="1 2">
    <location>
        <position position="95"/>
    </location>
    <ligand>
        <name>taurine</name>
        <dbReference type="ChEBI" id="CHEBI:507393"/>
    </ligand>
</feature>
<feature type="binding site" evidence="1 2">
    <location>
        <position position="99"/>
    </location>
    <ligand>
        <name>Fe cation</name>
        <dbReference type="ChEBI" id="CHEBI:24875"/>
        <note>catalytic</note>
    </ligand>
</feature>
<feature type="binding site" evidence="1 2">
    <location>
        <position position="101"/>
    </location>
    <ligand>
        <name>Fe cation</name>
        <dbReference type="ChEBI" id="CHEBI:24875"/>
        <note>catalytic</note>
    </ligand>
</feature>
<feature type="binding site" evidence="1 2">
    <location>
        <position position="102"/>
    </location>
    <ligand>
        <name>taurine</name>
        <dbReference type="ChEBI" id="CHEBI:507393"/>
    </ligand>
</feature>
<feature type="binding site" evidence="1 2">
    <location>
        <position position="126"/>
    </location>
    <ligand>
        <name>2-oxoglutarate</name>
        <dbReference type="ChEBI" id="CHEBI:16810"/>
    </ligand>
</feature>
<feature type="binding site" evidence="1 2">
    <location>
        <position position="255"/>
    </location>
    <ligand>
        <name>2-oxoglutarate</name>
        <dbReference type="ChEBI" id="CHEBI:16810"/>
    </ligand>
</feature>
<feature type="binding site" evidence="1 2">
    <location>
        <position position="255"/>
    </location>
    <ligand>
        <name>Fe cation</name>
        <dbReference type="ChEBI" id="CHEBI:24875"/>
        <note>catalytic</note>
    </ligand>
</feature>
<feature type="binding site" evidence="1 2">
    <location>
        <position position="266"/>
    </location>
    <ligand>
        <name>2-oxoglutarate</name>
        <dbReference type="ChEBI" id="CHEBI:16810"/>
    </ligand>
</feature>
<feature type="binding site" evidence="1 2">
    <location>
        <position position="270"/>
    </location>
    <ligand>
        <name>2-oxoglutarate</name>
        <dbReference type="ChEBI" id="CHEBI:16810"/>
    </ligand>
</feature>
<feature type="binding site" evidence="1 2">
    <location>
        <position position="270"/>
    </location>
    <ligand>
        <name>taurine</name>
        <dbReference type="ChEBI" id="CHEBI:507393"/>
    </ligand>
</feature>
<feature type="modified residue" description="3-hydroxytryptophan; by autocatalysis" evidence="1">
    <location>
        <position position="128"/>
    </location>
</feature>
<feature type="modified residue" description="3-hydroxytryptophan; by autocatalysis" evidence="1">
    <location>
        <position position="240"/>
    </location>
</feature>
<feature type="modified residue" description="3-hydroxytryptophan; by autocatalysis" evidence="1">
    <location>
        <position position="248"/>
    </location>
</feature>
<feature type="strand" evidence="11">
    <location>
        <begin position="6"/>
        <end position="14"/>
    </location>
</feature>
<feature type="strand" evidence="11">
    <location>
        <begin position="16"/>
        <end position="20"/>
    </location>
</feature>
<feature type="strand" evidence="11">
    <location>
        <begin position="23"/>
        <end position="25"/>
    </location>
</feature>
<feature type="helix" evidence="11">
    <location>
        <begin position="29"/>
        <end position="42"/>
    </location>
</feature>
<feature type="strand" evidence="11">
    <location>
        <begin position="43"/>
        <end position="47"/>
    </location>
</feature>
<feature type="helix" evidence="11">
    <location>
        <begin position="54"/>
        <end position="62"/>
    </location>
</feature>
<feature type="strand" evidence="11">
    <location>
        <begin position="71"/>
        <end position="73"/>
    </location>
</feature>
<feature type="strand" evidence="11">
    <location>
        <begin position="79"/>
        <end position="88"/>
    </location>
</feature>
<feature type="turn" evidence="11">
    <location>
        <begin position="101"/>
        <end position="104"/>
    </location>
</feature>
<feature type="strand" evidence="11">
    <location>
        <begin position="105"/>
        <end position="107"/>
    </location>
</feature>
<feature type="strand" evidence="11">
    <location>
        <begin position="110"/>
        <end position="118"/>
    </location>
</feature>
<feature type="strand" evidence="11">
    <location>
        <begin position="126"/>
        <end position="130"/>
    </location>
</feature>
<feature type="helix" evidence="11">
    <location>
        <begin position="131"/>
        <end position="136"/>
    </location>
</feature>
<feature type="helix" evidence="11">
    <location>
        <begin position="140"/>
        <end position="146"/>
    </location>
</feature>
<feature type="strand" evidence="11">
    <location>
        <begin position="150"/>
        <end position="153"/>
    </location>
</feature>
<feature type="helix" evidence="11">
    <location>
        <begin position="155"/>
        <end position="157"/>
    </location>
</feature>
<feature type="helix" evidence="11">
    <location>
        <begin position="161"/>
        <end position="164"/>
    </location>
</feature>
<feature type="helix" evidence="11">
    <location>
        <begin position="168"/>
        <end position="180"/>
    </location>
</feature>
<feature type="strand" evidence="11">
    <location>
        <begin position="184"/>
        <end position="191"/>
    </location>
</feature>
<feature type="turn" evidence="11">
    <location>
        <begin position="193"/>
        <end position="195"/>
    </location>
</feature>
<feature type="strand" evidence="11">
    <location>
        <begin position="198"/>
        <end position="200"/>
    </location>
</feature>
<feature type="turn" evidence="11">
    <location>
        <begin position="204"/>
        <end position="206"/>
    </location>
</feature>
<feature type="strand" evidence="11">
    <location>
        <begin position="207"/>
        <end position="210"/>
    </location>
</feature>
<feature type="helix" evidence="11">
    <location>
        <begin position="215"/>
        <end position="228"/>
    </location>
</feature>
<feature type="helix" evidence="11">
    <location>
        <begin position="232"/>
        <end position="234"/>
    </location>
</feature>
<feature type="strand" evidence="11">
    <location>
        <begin position="235"/>
        <end position="238"/>
    </location>
</feature>
<feature type="strand" evidence="11">
    <location>
        <begin position="245"/>
        <end position="249"/>
    </location>
</feature>
<feature type="strand" evidence="11">
    <location>
        <begin position="252"/>
        <end position="257"/>
    </location>
</feature>
<feature type="strand" evidence="11">
    <location>
        <begin position="266"/>
        <end position="273"/>
    </location>
</feature>
<sequence>MSERLSITPLGPYIGAQISGADLTRPLSDNQFEQLYHAVLRHQVVFLRDQAITPQQQRALAQRFGELHIHPVYPHAEGVDEIIVLDTHNDNPPDNDNWHTDVTFIETPPAGAILAAKELPSTGGDTLWTSGIAAYEALSVPFRQLLSGLRAEHDFRKSFPEYKYRKTEEEHQRWREAVAKNPPLLHPVVRTHPVSGKQALFVNEGFTTRIVDVSEKESEALLSFLFAHITKPEFQVRWRWQPNDIAIWDNRVTQHYANADYLPQRRIMHRATILGDKPFYRAG</sequence>
<organism>
    <name type="scientific">Escherichia coli (strain K12)</name>
    <dbReference type="NCBI Taxonomy" id="83333"/>
    <lineage>
        <taxon>Bacteria</taxon>
        <taxon>Pseudomonadati</taxon>
        <taxon>Pseudomonadota</taxon>
        <taxon>Gammaproteobacteria</taxon>
        <taxon>Enterobacterales</taxon>
        <taxon>Enterobacteriaceae</taxon>
        <taxon>Escherichia</taxon>
    </lineage>
</organism>
<protein>
    <recommendedName>
        <fullName evidence="8">Alpha-ketoglutarate-dependent taurine dioxygenase</fullName>
        <ecNumber evidence="1 2 7">1.14.11.17</ecNumber>
    </recommendedName>
    <alternativeName>
        <fullName>2-aminoethanesulfonate dioxygenase</fullName>
    </alternativeName>
    <alternativeName>
        <fullName>Sulfate starvation-induced protein 3</fullName>
        <shortName>SSI3</shortName>
    </alternativeName>
</protein>
<proteinExistence type="evidence at protein level"/>
<comment type="function">
    <text evidence="6 7">Catalyzes the alpha-ketoglutarate-dependent hydroxylation of taurine yielding sulfite and aminoacetaldehyde after decomposition of an unstable intermediate (PubMed:9287300). Is required for the utilization of taurine (2-aminoethanesulfonate) as an alternative sulfur source for growth in the absence of sulfate (PubMed:8808933). To a lesser extent, pentanesulfonate, 3-(N-morpholino)propanesulfonate and 1,3-dioxo-2-isoindolineethanesulfonate are also desulfonated by this enzyme in vitro; however, desulfonation by TauD of organosulfonates other than taurine seem to be of little or no importance for sulfur metabolism in vivo (PubMed:9287300).</text>
</comment>
<comment type="catalytic activity">
    <reaction evidence="1 2 7 10">
        <text>taurine + 2-oxoglutarate + O2 = aminoacetaldehyde + sulfite + succinate + CO2 + H(+)</text>
        <dbReference type="Rhea" id="RHEA:15909"/>
        <dbReference type="ChEBI" id="CHEBI:15378"/>
        <dbReference type="ChEBI" id="CHEBI:15379"/>
        <dbReference type="ChEBI" id="CHEBI:16526"/>
        <dbReference type="ChEBI" id="CHEBI:16810"/>
        <dbReference type="ChEBI" id="CHEBI:17359"/>
        <dbReference type="ChEBI" id="CHEBI:30031"/>
        <dbReference type="ChEBI" id="CHEBI:58213"/>
        <dbReference type="ChEBI" id="CHEBI:507393"/>
        <dbReference type="EC" id="1.14.11.17"/>
    </reaction>
    <physiologicalReaction direction="left-to-right" evidence="6">
        <dbReference type="Rhea" id="RHEA:15910"/>
    </physiologicalReaction>
</comment>
<comment type="cofactor">
    <cofactor evidence="1 2 7">
        <name>Fe(2+)</name>
        <dbReference type="ChEBI" id="CHEBI:29033"/>
    </cofactor>
    <text evidence="1 2">Binds 1 Fe(2+) ion per subunit.</text>
</comment>
<comment type="activity regulation">
    <text evidence="7">Activated by ascorbate and inhibited by divalent metal ions such as zinc, copper and cobalt.</text>
</comment>
<comment type="biophysicochemical properties">
    <kinetics>
        <KM evidence="7">55 uM for taurine (at pH 6.9)</KM>
        <KM evidence="7">11 uM for 2-oxoglutarate (at pH 6.9)</KM>
        <KM evidence="7">1490 uM for butanesulfonate (at pH 6.9)</KM>
        <KM evidence="7">590 uM for pentanesulfonate (at pH 6.9)</KM>
        <KM evidence="7">1510 uM for hexanesulfonate (at pH 6.9)</KM>
        <KM evidence="7">145 uM for 3-(N-morpholino)propanesulfonate (at pH 6.9)</KM>
        <KM evidence="7">485 uM for 1,3-dioxo-2-isoindolineethanesulfonate (at pH 6.9)</KM>
        <Vmax evidence="7">4.1 umol/min/mg enzyme with taurine as substrate (at pH 6.9)</Vmax>
        <Vmax evidence="7">1.3 umol/min/mg enzyme with butanesulfonate as substrate (at pH 6.9)</Vmax>
        <Vmax evidence="7">1.9 umol/min/mg enzyme with pentanesulfonate as substrate (at pH 6.9)</Vmax>
        <Vmax evidence="7">2.2 umol/min/mg enzyme with hexanesulfonate as substrate (at pH 6.9)</Vmax>
        <Vmax evidence="7">2.0 umol/min/mg enzyme with 3-(N-morpholino)propanesulfonate as substrate (at pH 6.9)</Vmax>
        <Vmax evidence="7">3.8 umol/min/mg enzyme with 1,3-dioxo-2-isoindolineethanesulfonate as substrate (at pH 6.9)</Vmax>
    </kinetics>
    <phDependence>
        <text evidence="7">Optimum pH is 6.9.</text>
    </phDependence>
</comment>
<comment type="pathway">
    <text evidence="6">Organosulfur degradation; taurine degradation via aerobic pathway; aminoacetaldehyde and sulfite from taurine: step 1/1.</text>
</comment>
<comment type="subunit">
    <text evidence="1 2 3 7">Homodimer (PubMed:11955067, PubMed:12741810, PubMed:9287300). Was later shown to be a homotetramer arranged as a dimer of two dimers (PubMed:22221834).</text>
</comment>
<comment type="induction">
    <text evidence="6 7">Is only expressed during growth in the absence of sulfate or cysteine.</text>
</comment>
<comment type="disruption phenotype">
    <text evidence="6">Disruption of this gene leads to a loss of the ability to utilize taurine as a source of sulfur, but does not affect the utilization of a range of other aliphatic sulfonates as sulfur sources.</text>
</comment>
<comment type="biotechnology">
    <text evidence="4">Taurine dioxygenase can be used for enzymatic determination of taurine concentration in food quality control, biological research, and medical diagnosis.</text>
</comment>
<comment type="similarity">
    <text evidence="9">Belongs to the TfdA dioxygenase family.</text>
</comment>
<comment type="sequence caution" evidence="9">
    <conflict type="frameshift">
        <sequence resource="EMBL" id="M24488"/>
    </conflict>
</comment>
<dbReference type="EC" id="1.14.11.17" evidence="1 2 7"/>
<dbReference type="EMBL" id="D85613">
    <property type="protein sequence ID" value="BAA12841.1"/>
    <property type="molecule type" value="Genomic_DNA"/>
</dbReference>
<dbReference type="EMBL" id="U73857">
    <property type="protein sequence ID" value="AAB18091.1"/>
    <property type="molecule type" value="Genomic_DNA"/>
</dbReference>
<dbReference type="EMBL" id="U00096">
    <property type="protein sequence ID" value="AAC73471.1"/>
    <property type="molecule type" value="Genomic_DNA"/>
</dbReference>
<dbReference type="EMBL" id="AP009048">
    <property type="protein sequence ID" value="BAE76149.1"/>
    <property type="molecule type" value="Genomic_DNA"/>
</dbReference>
<dbReference type="EMBL" id="M24488">
    <property type="status" value="NOT_ANNOTATED_CDS"/>
    <property type="molecule type" value="Genomic_DNA"/>
</dbReference>
<dbReference type="PIR" id="S78607">
    <property type="entry name" value="H64764"/>
</dbReference>
<dbReference type="RefSeq" id="NP_414902.1">
    <property type="nucleotide sequence ID" value="NC_000913.3"/>
</dbReference>
<dbReference type="RefSeq" id="WP_000004027.1">
    <property type="nucleotide sequence ID" value="NZ_SSZK01000009.1"/>
</dbReference>
<dbReference type="PDB" id="1GQW">
    <property type="method" value="X-ray"/>
    <property type="resolution" value="3.00 A"/>
    <property type="chains" value="A/B=2-283"/>
</dbReference>
<dbReference type="PDB" id="1GY9">
    <property type="method" value="X-ray"/>
    <property type="resolution" value="2.50 A"/>
    <property type="chains" value="A/B=2-283"/>
</dbReference>
<dbReference type="PDB" id="1OS7">
    <property type="method" value="X-ray"/>
    <property type="resolution" value="2.50 A"/>
    <property type="chains" value="A/B/C/D=1-283"/>
</dbReference>
<dbReference type="PDB" id="1OTJ">
    <property type="method" value="X-ray"/>
    <property type="resolution" value="1.90 A"/>
    <property type="chains" value="A/B/C/D=1-283"/>
</dbReference>
<dbReference type="PDB" id="6EDH">
    <property type="method" value="X-ray"/>
    <property type="resolution" value="1.73 A"/>
    <property type="chains" value="A/B=1-283"/>
</dbReference>
<dbReference type="PDBsum" id="1GQW"/>
<dbReference type="PDBsum" id="1GY9"/>
<dbReference type="PDBsum" id="1OS7"/>
<dbReference type="PDBsum" id="1OTJ"/>
<dbReference type="PDBsum" id="6EDH"/>
<dbReference type="SMR" id="P37610"/>
<dbReference type="BioGRID" id="4259830">
    <property type="interactions" value="18"/>
</dbReference>
<dbReference type="ComplexPortal" id="CPX-2120">
    <property type="entry name" value="Taurine dioxygenase complex, tetrameric"/>
</dbReference>
<dbReference type="ComplexPortal" id="CPX-3190">
    <property type="entry name" value="Taurine dioxygenase complex, dimeric"/>
</dbReference>
<dbReference type="DIP" id="DIP-10966N"/>
<dbReference type="FunCoup" id="P37610">
    <property type="interactions" value="519"/>
</dbReference>
<dbReference type="IntAct" id="P37610">
    <property type="interactions" value="4"/>
</dbReference>
<dbReference type="MINT" id="P37610"/>
<dbReference type="STRING" id="511145.b0368"/>
<dbReference type="DrugBank" id="DB01956">
    <property type="generic name" value="Taurine"/>
</dbReference>
<dbReference type="PaxDb" id="511145-b0368"/>
<dbReference type="EnsemblBacteria" id="AAC73471">
    <property type="protein sequence ID" value="AAC73471"/>
    <property type="gene ID" value="b0368"/>
</dbReference>
<dbReference type="GeneID" id="945021"/>
<dbReference type="KEGG" id="ecj:JW0360"/>
<dbReference type="KEGG" id="eco:b0368"/>
<dbReference type="PATRIC" id="fig|1411691.4.peg.1911"/>
<dbReference type="EchoBASE" id="EB2322"/>
<dbReference type="eggNOG" id="COG2175">
    <property type="taxonomic scope" value="Bacteria"/>
</dbReference>
<dbReference type="HOGENOM" id="CLU_036005_2_1_6"/>
<dbReference type="InParanoid" id="P37610"/>
<dbReference type="OMA" id="NNWHTDV"/>
<dbReference type="OrthoDB" id="581608at2"/>
<dbReference type="PhylomeDB" id="P37610"/>
<dbReference type="BioCyc" id="EcoCyc:MONOMER0-147"/>
<dbReference type="BioCyc" id="MetaCyc:MONOMER0-147"/>
<dbReference type="BRENDA" id="1.14.11.17">
    <property type="organism ID" value="2026"/>
</dbReference>
<dbReference type="SABIO-RK" id="P37610"/>
<dbReference type="UniPathway" id="UPA00336">
    <property type="reaction ID" value="UER00542"/>
</dbReference>
<dbReference type="EvolutionaryTrace" id="P37610"/>
<dbReference type="PRO" id="PR:P37610"/>
<dbReference type="Proteomes" id="UP000000625">
    <property type="component" value="Chromosome"/>
</dbReference>
<dbReference type="GO" id="GO:0005737">
    <property type="term" value="C:cytoplasm"/>
    <property type="evidence" value="ECO:0000314"/>
    <property type="project" value="EcoliWiki"/>
</dbReference>
<dbReference type="GO" id="GO:1990205">
    <property type="term" value="C:taurine dioxygenase complex"/>
    <property type="evidence" value="ECO:0000314"/>
    <property type="project" value="EcoCyc"/>
</dbReference>
<dbReference type="GO" id="GO:0008198">
    <property type="term" value="F:ferrous iron binding"/>
    <property type="evidence" value="ECO:0000314"/>
    <property type="project" value="EcoCyc"/>
</dbReference>
<dbReference type="GO" id="GO:0042802">
    <property type="term" value="F:identical protein binding"/>
    <property type="evidence" value="ECO:0000353"/>
    <property type="project" value="EcoCyc"/>
</dbReference>
<dbReference type="GO" id="GO:0031418">
    <property type="term" value="F:L-ascorbic acid binding"/>
    <property type="evidence" value="ECO:0007669"/>
    <property type="project" value="UniProtKB-KW"/>
</dbReference>
<dbReference type="GO" id="GO:0000908">
    <property type="term" value="F:taurine dioxygenase activity"/>
    <property type="evidence" value="ECO:0000314"/>
    <property type="project" value="EcoliWiki"/>
</dbReference>
<dbReference type="GO" id="GO:0051289">
    <property type="term" value="P:protein homotetramerization"/>
    <property type="evidence" value="ECO:0000353"/>
    <property type="project" value="EcoCyc"/>
</dbReference>
<dbReference type="GO" id="GO:0006790">
    <property type="term" value="P:sulfur compound metabolic process"/>
    <property type="evidence" value="ECO:0000315"/>
    <property type="project" value="EcoliWiki"/>
</dbReference>
<dbReference type="GO" id="GO:0019529">
    <property type="term" value="P:taurine catabolic process"/>
    <property type="evidence" value="ECO:0000314"/>
    <property type="project" value="ComplexPortal"/>
</dbReference>
<dbReference type="FunFam" id="3.60.130.10:FF:000002">
    <property type="entry name" value="Alpha-ketoglutarate-dependent taurine dioxygenase"/>
    <property type="match status" value="1"/>
</dbReference>
<dbReference type="Gene3D" id="3.60.130.10">
    <property type="entry name" value="Clavaminate synthase-like"/>
    <property type="match status" value="1"/>
</dbReference>
<dbReference type="InterPro" id="IPR051323">
    <property type="entry name" value="AtsK-like"/>
</dbReference>
<dbReference type="InterPro" id="IPR042098">
    <property type="entry name" value="TauD-like_sf"/>
</dbReference>
<dbReference type="InterPro" id="IPR003819">
    <property type="entry name" value="TauD/TfdA-like"/>
</dbReference>
<dbReference type="NCBIfam" id="NF007104">
    <property type="entry name" value="PRK09553.1"/>
    <property type="match status" value="1"/>
</dbReference>
<dbReference type="PANTHER" id="PTHR30468">
    <property type="entry name" value="ALPHA-KETOGLUTARATE-DEPENDENT SULFONATE DIOXYGENASE"/>
    <property type="match status" value="1"/>
</dbReference>
<dbReference type="PANTHER" id="PTHR30468:SF1">
    <property type="entry name" value="ALPHA-KETOGLUTARATE-DEPENDENT SULFONATE DIOXYGENASE"/>
    <property type="match status" value="1"/>
</dbReference>
<dbReference type="Pfam" id="PF02668">
    <property type="entry name" value="TauD"/>
    <property type="match status" value="1"/>
</dbReference>
<dbReference type="SUPFAM" id="SSF51197">
    <property type="entry name" value="Clavaminate synthase-like"/>
    <property type="match status" value="1"/>
</dbReference>
<keyword id="KW-0002">3D-structure</keyword>
<keyword id="KW-0223">Dioxygenase</keyword>
<keyword id="KW-0903">Direct protein sequencing</keyword>
<keyword id="KW-0379">Hydroxylation</keyword>
<keyword id="KW-0408">Iron</keyword>
<keyword id="KW-0479">Metal-binding</keyword>
<keyword id="KW-0560">Oxidoreductase</keyword>
<keyword id="KW-1185">Reference proteome</keyword>
<keyword id="KW-0847">Vitamin C</keyword>
<evidence type="ECO:0000269" key="1">
    <source>
    </source>
</evidence>
<evidence type="ECO:0000269" key="2">
    <source>
    </source>
</evidence>
<evidence type="ECO:0000269" key="3">
    <source>
    </source>
</evidence>
<evidence type="ECO:0000269" key="4">
    <source>
    </source>
</evidence>
<evidence type="ECO:0000269" key="5">
    <source>
    </source>
</evidence>
<evidence type="ECO:0000269" key="6">
    <source>
    </source>
</evidence>
<evidence type="ECO:0000269" key="7">
    <source>
    </source>
</evidence>
<evidence type="ECO:0000303" key="8">
    <source>
    </source>
</evidence>
<evidence type="ECO:0000305" key="9"/>
<evidence type="ECO:0000305" key="10">
    <source>
    </source>
</evidence>
<evidence type="ECO:0007829" key="11">
    <source>
        <dbReference type="PDB" id="6EDH"/>
    </source>
</evidence>
<accession>P37610</accession>
<accession>P77797</accession>
<accession>Q2MC57</accession>
<accession>Q47540</accession>
<name>TAUD_ECOLI</name>